<protein>
    <recommendedName>
        <fullName evidence="2">mRNA-capping enzyme</fullName>
    </recommendedName>
    <alternativeName>
        <fullName evidence="2">VTF/CE</fullName>
    </alternativeName>
    <domain>
        <recommendedName>
            <fullName>Polynucleotide 5'-triphosphatase</fullName>
            <ecNumber>3.6.1.74</ecNumber>
        </recommendedName>
        <alternativeName>
            <fullName>mRNA 5'-triphosphatase</fullName>
            <shortName>TPase</shortName>
        </alternativeName>
    </domain>
    <domain>
        <recommendedName>
            <fullName>mRNA guanylyltransferase</fullName>
            <ecNumber>2.7.7.50</ecNumber>
        </recommendedName>
        <alternativeName>
            <fullName>GTP--RNA guanylyltransferase</fullName>
            <shortName>GTase</shortName>
        </alternativeName>
    </domain>
    <domain>
        <recommendedName>
            <fullName>mRNA (guanine-N(7))-methyltransferase</fullName>
            <ecNumber>2.1.1.56</ecNumber>
        </recommendedName>
    </domain>
</protein>
<evidence type="ECO:0000250" key="1">
    <source>
        <dbReference type="UniProtKB" id="P04298"/>
    </source>
</evidence>
<evidence type="ECO:0000250" key="2">
    <source>
        <dbReference type="UniProtKB" id="P32094"/>
    </source>
</evidence>
<evidence type="ECO:0000255" key="3"/>
<evidence type="ECO:0000255" key="4">
    <source>
        <dbReference type="PROSITE-ProRule" id="PRU00895"/>
    </source>
</evidence>
<evidence type="ECO:0000305" key="5"/>
<gene>
    <name type="ordered locus">Pret-113</name>
</gene>
<dbReference type="EC" id="3.6.1.74"/>
<dbReference type="EC" id="2.7.7.50"/>
<dbReference type="EC" id="2.1.1.56"/>
<dbReference type="EMBL" id="AY261363">
    <property type="status" value="NOT_ANNOTATED_CDS"/>
    <property type="molecule type" value="Genomic_DNA"/>
</dbReference>
<dbReference type="UniPathway" id="UPA00922"/>
<dbReference type="Proteomes" id="UP000000859">
    <property type="component" value="Segment"/>
</dbReference>
<dbReference type="GO" id="GO:0044423">
    <property type="term" value="C:virion component"/>
    <property type="evidence" value="ECO:0007669"/>
    <property type="project" value="UniProtKB-KW"/>
</dbReference>
<dbReference type="GO" id="GO:0005525">
    <property type="term" value="F:GTP binding"/>
    <property type="evidence" value="ECO:0007669"/>
    <property type="project" value="UniProtKB-KW"/>
</dbReference>
<dbReference type="GO" id="GO:0004482">
    <property type="term" value="F:mRNA 5'-cap (guanine-N7-)-methyltransferase activity"/>
    <property type="evidence" value="ECO:0007669"/>
    <property type="project" value="UniProtKB-EC"/>
</dbReference>
<dbReference type="GO" id="GO:0140818">
    <property type="term" value="F:mRNA 5'-triphosphate monophosphatase activity"/>
    <property type="evidence" value="ECO:0007669"/>
    <property type="project" value="RHEA"/>
</dbReference>
<dbReference type="GO" id="GO:0004484">
    <property type="term" value="F:mRNA guanylyltransferase activity"/>
    <property type="evidence" value="ECO:0007669"/>
    <property type="project" value="UniProtKB-EC"/>
</dbReference>
<dbReference type="GO" id="GO:0004651">
    <property type="term" value="F:polynucleotide 5'-phosphatase activity"/>
    <property type="evidence" value="ECO:0007669"/>
    <property type="project" value="UniProtKB-EC"/>
</dbReference>
<dbReference type="GO" id="GO:0003723">
    <property type="term" value="F:RNA binding"/>
    <property type="evidence" value="ECO:0007669"/>
    <property type="project" value="UniProtKB-KW"/>
</dbReference>
<dbReference type="CDD" id="cd02440">
    <property type="entry name" value="AdoMet_MTases"/>
    <property type="match status" value="1"/>
</dbReference>
<dbReference type="Gene3D" id="3.30.470.30">
    <property type="entry name" value="DNA ligase/mRNA capping enzyme"/>
    <property type="match status" value="1"/>
</dbReference>
<dbReference type="Gene3D" id="3.40.50.150">
    <property type="entry name" value="Vaccinia Virus protein VP39"/>
    <property type="match status" value="1"/>
</dbReference>
<dbReference type="InterPro" id="IPR033469">
    <property type="entry name" value="CYTH-like_dom_sf"/>
</dbReference>
<dbReference type="InterPro" id="IPR004971">
    <property type="entry name" value="mRNA_G-N7_MeTrfase_dom"/>
</dbReference>
<dbReference type="InterPro" id="IPR039753">
    <property type="entry name" value="RG7MT1"/>
</dbReference>
<dbReference type="InterPro" id="IPR029063">
    <property type="entry name" value="SAM-dependent_MTases_sf"/>
</dbReference>
<dbReference type="PANTHER" id="PTHR12189:SF2">
    <property type="entry name" value="MRNA CAP GUANINE-N7 METHYLTRANSFERASE"/>
    <property type="match status" value="1"/>
</dbReference>
<dbReference type="PANTHER" id="PTHR12189">
    <property type="entry name" value="MRNA GUANINE-7- METHYLTRANSFERASE"/>
    <property type="match status" value="1"/>
</dbReference>
<dbReference type="Pfam" id="PF03291">
    <property type="entry name" value="mRNA_G-N7_MeTrfase"/>
    <property type="match status" value="1"/>
</dbReference>
<dbReference type="SUPFAM" id="SSF55154">
    <property type="entry name" value="CYTH-like phosphatases"/>
    <property type="match status" value="1"/>
</dbReference>
<dbReference type="SUPFAM" id="SSF56091">
    <property type="entry name" value="DNA ligase/mRNA capping enzyme, catalytic domain"/>
    <property type="match status" value="1"/>
</dbReference>
<dbReference type="SUPFAM" id="SSF53335">
    <property type="entry name" value="S-adenosyl-L-methionine-dependent methyltransferases"/>
    <property type="match status" value="1"/>
</dbReference>
<dbReference type="PROSITE" id="PS51562">
    <property type="entry name" value="RNA_CAP0_MT"/>
    <property type="match status" value="1"/>
</dbReference>
<comment type="function">
    <text evidence="2">Probably catalyzes the second reaction in the mRNA cap formation pathway (By similarity). Forms a covalent complex with GTP (By similarity).</text>
</comment>
<comment type="catalytic activity">
    <reaction evidence="1">
        <text>a 5'-end triphospho-ribonucleoside in mRNA + H2O = a 5'-end diphospho-ribonucleoside in mRNA + phosphate + H(+)</text>
        <dbReference type="Rhea" id="RHEA:67004"/>
        <dbReference type="Rhea" id="RHEA-COMP:17164"/>
        <dbReference type="Rhea" id="RHEA-COMP:17165"/>
        <dbReference type="ChEBI" id="CHEBI:15377"/>
        <dbReference type="ChEBI" id="CHEBI:15378"/>
        <dbReference type="ChEBI" id="CHEBI:43474"/>
        <dbReference type="ChEBI" id="CHEBI:167616"/>
        <dbReference type="ChEBI" id="CHEBI:167618"/>
        <dbReference type="EC" id="3.6.1.74"/>
    </reaction>
    <physiologicalReaction direction="left-to-right" evidence="1">
        <dbReference type="Rhea" id="RHEA:67005"/>
    </physiologicalReaction>
</comment>
<comment type="catalytic activity">
    <reaction evidence="2">
        <text>a 5'-end diphospho-ribonucleoside in mRNA + GTP + H(+) = a 5'-end (5'-triphosphoguanosine)-ribonucleoside in mRNA + diphosphate</text>
        <dbReference type="Rhea" id="RHEA:67012"/>
        <dbReference type="Rhea" id="RHEA-COMP:17165"/>
        <dbReference type="Rhea" id="RHEA-COMP:17166"/>
        <dbReference type="ChEBI" id="CHEBI:15378"/>
        <dbReference type="ChEBI" id="CHEBI:33019"/>
        <dbReference type="ChEBI" id="CHEBI:37565"/>
        <dbReference type="ChEBI" id="CHEBI:167616"/>
        <dbReference type="ChEBI" id="CHEBI:167617"/>
        <dbReference type="EC" id="2.7.7.50"/>
    </reaction>
</comment>
<comment type="catalytic activity">
    <reaction evidence="4">
        <text>a 5'-end (5'-triphosphoguanosine)-ribonucleoside in mRNA + S-adenosyl-L-methionine = a 5'-end (N(7)-methyl 5'-triphosphoguanosine)-ribonucleoside in mRNA + S-adenosyl-L-homocysteine</text>
        <dbReference type="Rhea" id="RHEA:67008"/>
        <dbReference type="Rhea" id="RHEA-COMP:17166"/>
        <dbReference type="Rhea" id="RHEA-COMP:17167"/>
        <dbReference type="ChEBI" id="CHEBI:57856"/>
        <dbReference type="ChEBI" id="CHEBI:59789"/>
        <dbReference type="ChEBI" id="CHEBI:156461"/>
        <dbReference type="ChEBI" id="CHEBI:167617"/>
        <dbReference type="EC" id="2.1.1.56"/>
    </reaction>
</comment>
<comment type="pathway">
    <text>mRNA processing; mRNA capping.</text>
</comment>
<comment type="subunit">
    <text evidence="2">Part of the viral DNA-directed RNA polymerase that consists of 8 polII-like subunits (RPB1, RPB2, RPB3, RPB5, RPB6, RPB7, RPB9, RPB10), a capping enzyme and a termination factor.</text>
</comment>
<comment type="subcellular location">
    <subcellularLocation>
        <location evidence="2">Virion</location>
    </subcellularLocation>
    <text evidence="2">Found in association with viral nucleoid.</text>
</comment>
<comment type="induction">
    <text evidence="5">Expressed in the early phase of the viral replicative cycle.</text>
</comment>
<comment type="domain">
    <text evidence="2">The N-terminus contains the mRNA 5'-triphosphatase domain, the central part contains the mRNA guanylyltransferase, and C-terminus contains the methyltransferase domain.</text>
</comment>
<comment type="similarity">
    <text evidence="5">In the N-terminal section; belongs to the dsDNA virus mRNA guanylyltransferase family.</text>
</comment>
<comment type="similarity">
    <text evidence="4">In the C-terminal section; belongs to the class I-like SAM-binding methyltransferase superfamily. mRNA cap 0 methyltransferase family.</text>
</comment>
<accession>P0C993</accession>
<keyword id="KW-0244">Early protein</keyword>
<keyword id="KW-0342">GTP-binding</keyword>
<keyword id="KW-0378">Hydrolase</keyword>
<keyword id="KW-0489">Methyltransferase</keyword>
<keyword id="KW-0506">mRNA capping</keyword>
<keyword id="KW-0507">mRNA processing</keyword>
<keyword id="KW-0547">Nucleotide-binding</keyword>
<keyword id="KW-0548">Nucleotidyltransferase</keyword>
<keyword id="KW-0694">RNA-binding</keyword>
<keyword id="KW-0949">S-adenosyl-L-methionine</keyword>
<keyword id="KW-0808">Transferase</keyword>
<keyword id="KW-0946">Virion</keyword>
<name>MCE_ASFP4</name>
<proteinExistence type="inferred from homology"/>
<organism>
    <name type="scientific">African swine fever virus (isolate Tick/South Africa/Pretoriuskop Pr4/1996)</name>
    <name type="common">ASFV</name>
    <dbReference type="NCBI Taxonomy" id="561443"/>
    <lineage>
        <taxon>Viruses</taxon>
        <taxon>Varidnaviria</taxon>
        <taxon>Bamfordvirae</taxon>
        <taxon>Nucleocytoviricota</taxon>
        <taxon>Pokkesviricetes</taxon>
        <taxon>Asfuvirales</taxon>
        <taxon>Asfarviridae</taxon>
        <taxon>Asfivirus</taxon>
        <taxon>African swine fever virus</taxon>
    </lineage>
</organism>
<sequence length="868" mass="99981">MASLDNLVARYQRCFNDQSLKNSTIELEIRFQQINFLLFKTVYEALVAQEIPSTISHSIRCIKKVHHENHCREKILPSENFYFKKQPLMFFKFSEPASLGCKVSLAIEQPIRKFILDSSVLVRLKNRTTFRVSELWKIELTIVKQLMGSEVSAKLTAFKTLLFDTPEQQTTKNMMSLINPDDEYLYEIEIEYTGKPESLTAADVIKIKNTVLTLISPNHLMLTAYHQAIEFIASHILSSEILLARIKSGKWGLKRLLPQVKSMTKADYMKFYPPVGYYITDKADGIRGIAVIQDTQIYVVADQLYSLGTTGIEPLKPTILDGEFMPEKKEFYGFDVIMYEGNLLTQQGFETRIETLSKGIKVLQAFNIKAEMKPFISLTSADPNVLLKNFESIFKKKTRPYSIDGIILVEPGNSYLNTNTFKWKPTWDNTLDFLVRKCPESLNVPEYAPKKGFSLHLLFVGISGELFKKLALNWCPGYTKLFPVTQRNQNYFPVQFQPSDFPLAFLYYHPDTSSFSDIDGKVLEMRCLKREINHVSWEIVKIREDRQQDLKTGGYFGNDFKTAELTWLNYMDPFSFEELAKGPSGMYFAGAKTGIYRAQTALISFIKQEIIQKISHQSWVIDLGIGKGQDLGRYLDAGVRHLVGIDKDQTALAELVYRKFSHATTRQHKHATNIYVLHQDLAEPAKEISEKVHQIYGFPKEGASSIVSNLFIHYLMKNTQQVENLAVLCHKLLQPGGMVWFTTMLGERVLELLHENRIELNEVWEARENEVVKFAIKRLFKEDILQETGQEIGVLLPFSNGDFYNEYLVNTAFLIKIFKHHGFSLVQKQSFKDWIPEFQNFSKSLYKILTEADKTWTSLFGFICLRKN</sequence>
<feature type="chain" id="PRO_0000373093" description="mRNA-capping enzyme">
    <location>
        <begin position="1"/>
        <end position="868"/>
    </location>
</feature>
<feature type="domain" description="mRNA cap 0 methyltransferase" evidence="4">
    <location>
        <begin position="594"/>
        <end position="868"/>
    </location>
</feature>
<feature type="active site" description="N6-GMP-lysine intermediate" evidence="3">
    <location>
        <position position="282"/>
    </location>
</feature>
<feature type="binding site" evidence="4">
    <location>
        <position position="607"/>
    </location>
    <ligand>
        <name>S-adenosyl-L-methionine</name>
        <dbReference type="ChEBI" id="CHEBI:59789"/>
    </ligand>
</feature>
<feature type="binding site" evidence="4">
    <location>
        <position position="624"/>
    </location>
    <ligand>
        <name>S-adenosyl-L-methionine</name>
        <dbReference type="ChEBI" id="CHEBI:59789"/>
    </ligand>
</feature>
<feature type="binding site" evidence="4">
    <location>
        <position position="646"/>
    </location>
    <ligand>
        <name>S-adenosyl-L-methionine</name>
        <dbReference type="ChEBI" id="CHEBI:59789"/>
    </ligand>
</feature>
<feature type="binding site" evidence="4">
    <location>
        <begin position="710"/>
        <end position="712"/>
    </location>
    <ligand>
        <name>S-adenosyl-L-methionine</name>
        <dbReference type="ChEBI" id="CHEBI:59789"/>
    </ligand>
</feature>
<feature type="site" description="mRNA cap binding" evidence="4">
    <location>
        <position position="627"/>
    </location>
</feature>
<feature type="site" description="mRNA cap binding" evidence="4">
    <location>
        <position position="658"/>
    </location>
</feature>
<feature type="site" description="mRNA cap binding" evidence="4">
    <location>
        <position position="713"/>
    </location>
</feature>
<feature type="site" description="mRNA cap binding" evidence="4">
    <location>
        <position position="806"/>
    </location>
</feature>
<organismHost>
    <name type="scientific">Ornithodoros</name>
    <name type="common">relapsing fever ticks</name>
    <dbReference type="NCBI Taxonomy" id="6937"/>
</organismHost>
<organismHost>
    <name type="scientific">Phacochoerus aethiopicus</name>
    <name type="common">Warthog</name>
    <dbReference type="NCBI Taxonomy" id="85517"/>
</organismHost>
<organismHost>
    <name type="scientific">Phacochoerus africanus</name>
    <name type="common">Warthog</name>
    <dbReference type="NCBI Taxonomy" id="41426"/>
</organismHost>
<organismHost>
    <name type="scientific">Potamochoerus larvatus</name>
    <name type="common">Bushpig</name>
    <dbReference type="NCBI Taxonomy" id="273792"/>
</organismHost>
<organismHost>
    <name type="scientific">Sus scrofa</name>
    <name type="common">Pig</name>
    <dbReference type="NCBI Taxonomy" id="9823"/>
</organismHost>
<reference key="1">
    <citation type="submission" date="2003-03" db="EMBL/GenBank/DDBJ databases">
        <title>African swine fever virus genomes.</title>
        <authorList>
            <person name="Kutish G.F."/>
            <person name="Rock D.L."/>
        </authorList>
    </citation>
    <scope>NUCLEOTIDE SEQUENCE [GENOMIC DNA]</scope>
</reference>